<feature type="chain" id="PRO_0000292004" description="Tetratricopeptide repeat protein 39B">
    <location>
        <begin position="1"/>
        <end position="588"/>
    </location>
</feature>
<feature type="repeat" description="TPR 1">
    <location>
        <begin position="294"/>
        <end position="327"/>
    </location>
</feature>
<feature type="repeat" description="TPR 2">
    <location>
        <begin position="485"/>
        <end position="518"/>
    </location>
</feature>
<feature type="repeat" description="TPR 3">
    <location>
        <begin position="526"/>
        <end position="559"/>
    </location>
</feature>
<keyword id="KW-0443">Lipid metabolism</keyword>
<keyword id="KW-1185">Reference proteome</keyword>
<keyword id="KW-0677">Repeat</keyword>
<keyword id="KW-0802">TPR repeat</keyword>
<proteinExistence type="evidence at transcript level"/>
<dbReference type="EMBL" id="CR855604">
    <property type="protein sequence ID" value="CAJ81725.1"/>
    <property type="molecule type" value="mRNA"/>
</dbReference>
<dbReference type="RefSeq" id="NP_001016802.1">
    <property type="nucleotide sequence ID" value="NM_001016802.2"/>
</dbReference>
<dbReference type="SMR" id="Q28DB0"/>
<dbReference type="FunCoup" id="Q28DB0">
    <property type="interactions" value="152"/>
</dbReference>
<dbReference type="PaxDb" id="8364-ENSXETP00000007165"/>
<dbReference type="GeneID" id="549556"/>
<dbReference type="KEGG" id="xtr:549556"/>
<dbReference type="AGR" id="Xenbase:XB-GENE-1016436"/>
<dbReference type="CTD" id="158219"/>
<dbReference type="Xenbase" id="XB-GENE-1016436">
    <property type="gene designation" value="ttc39b"/>
</dbReference>
<dbReference type="eggNOG" id="KOG3783">
    <property type="taxonomic scope" value="Eukaryota"/>
</dbReference>
<dbReference type="HOGENOM" id="CLU_010086_3_0_1"/>
<dbReference type="InParanoid" id="Q28DB0"/>
<dbReference type="OMA" id="ELMWAHC"/>
<dbReference type="OrthoDB" id="43460at2759"/>
<dbReference type="PhylomeDB" id="Q28DB0"/>
<dbReference type="TreeFam" id="TF313761"/>
<dbReference type="Proteomes" id="UP000008143">
    <property type="component" value="Chromosome 1"/>
</dbReference>
<dbReference type="Bgee" id="ENSXETG00000003301">
    <property type="expression patterns" value="Expressed in brain and 13 other cell types or tissues"/>
</dbReference>
<dbReference type="ExpressionAtlas" id="Q28DB0">
    <property type="expression patterns" value="baseline and differential"/>
</dbReference>
<dbReference type="GO" id="GO:0006629">
    <property type="term" value="P:lipid metabolic process"/>
    <property type="evidence" value="ECO:0007669"/>
    <property type="project" value="UniProtKB-KW"/>
</dbReference>
<dbReference type="Gene3D" id="1.25.40.10">
    <property type="entry name" value="Tetratricopeptide repeat domain"/>
    <property type="match status" value="2"/>
</dbReference>
<dbReference type="InterPro" id="IPR019412">
    <property type="entry name" value="Iml2/TPR_39"/>
</dbReference>
<dbReference type="InterPro" id="IPR011990">
    <property type="entry name" value="TPR-like_helical_dom_sf"/>
</dbReference>
<dbReference type="InterPro" id="IPR019734">
    <property type="entry name" value="TPR_rpt"/>
</dbReference>
<dbReference type="PANTHER" id="PTHR31859">
    <property type="entry name" value="TETRATRICOPEPTIDE REPEAT PROTEIN 39 FAMILY MEMBER"/>
    <property type="match status" value="1"/>
</dbReference>
<dbReference type="PANTHER" id="PTHR31859:SF4">
    <property type="entry name" value="TETRATRICOPEPTIDE REPEAT PROTEIN 39B"/>
    <property type="match status" value="1"/>
</dbReference>
<dbReference type="Pfam" id="PF10300">
    <property type="entry name" value="Iml2-TPR_39"/>
    <property type="match status" value="1"/>
</dbReference>
<dbReference type="Pfam" id="PF13181">
    <property type="entry name" value="TPR_8"/>
    <property type="match status" value="1"/>
</dbReference>
<dbReference type="SMART" id="SM00028">
    <property type="entry name" value="TPR"/>
    <property type="match status" value="3"/>
</dbReference>
<dbReference type="SUPFAM" id="SSF48452">
    <property type="entry name" value="TPR-like"/>
    <property type="match status" value="1"/>
</dbReference>
<accession>Q28DB0</accession>
<organism>
    <name type="scientific">Xenopus tropicalis</name>
    <name type="common">Western clawed frog</name>
    <name type="synonym">Silurana tropicalis</name>
    <dbReference type="NCBI Taxonomy" id="8364"/>
    <lineage>
        <taxon>Eukaryota</taxon>
        <taxon>Metazoa</taxon>
        <taxon>Chordata</taxon>
        <taxon>Craniata</taxon>
        <taxon>Vertebrata</taxon>
        <taxon>Euteleostomi</taxon>
        <taxon>Amphibia</taxon>
        <taxon>Batrachia</taxon>
        <taxon>Anura</taxon>
        <taxon>Pipoidea</taxon>
        <taxon>Pipidae</taxon>
        <taxon>Xenopodinae</taxon>
        <taxon>Xenopus</taxon>
        <taxon>Silurana</taxon>
    </lineage>
</organism>
<sequence>MAFVSNGTERDADEEGFEDAYENIPVASKMDLRCALEECTLALNLFLNNKFSEALEILRPWAKESIYHALGYSTILVMQSAMTFEPQDVQMGISTMKEALQTCQRFRKRTTVVESLSNLVSKQSGDQLTEEEMHAEICYAECLLQKATLTFVQDENMINFIKGGMKIRTSYQIYKECHQLYSLAVTQGKTCSDTHHQFEGGVKLGIGAFNLMLSLLPSRVLRLLEFIGFSGNREFGLSQLREGASGNSIRAILCVLTLLFYHTYISTILGTGEANLEEAEALLEPYLKKFPNGSIILFYAARIDILKGRFEQAQETFQKCIVSQQEWKQIHHLCYWELMWCHSFQQDWLQAYRYADLLCKESKWSKATYVFQKAAILSMLPDDVVKTTGEDIVALFRQVEGLKQRIAGKSIPTEKFAVRKSRRYASDNPVKLTLPALEMVYVWNGFTIVGKRPDLTENVLVTIEKAEVALQSEKNPSEYHPDDLCLVQLLKGVCLKHLGRLLQAELCFNQVIQSEKRVKYDHYLLPFTFYELGLLYKDQGDRDKAIRYIETAKSNYKDYSLESRLHFRIHAALSSLKGSPVSTPSTPQ</sequence>
<comment type="function">
    <text evidence="1">May be involved in lipid metabolism.</text>
</comment>
<comment type="similarity">
    <text evidence="2">Belongs to the TTC39 family.</text>
</comment>
<evidence type="ECO:0000250" key="1">
    <source>
        <dbReference type="UniProtKB" id="Q8BYY4"/>
    </source>
</evidence>
<evidence type="ECO:0000305" key="2"/>
<protein>
    <recommendedName>
        <fullName>Tetratricopeptide repeat protein 39B</fullName>
        <shortName>TPR repeat protein 39B</shortName>
    </recommendedName>
</protein>
<gene>
    <name type="primary">ttc39b</name>
    <name type="ORF">TEgg088o02.1</name>
</gene>
<name>TT39B_XENTR</name>
<reference key="1">
    <citation type="submission" date="2006-10" db="EMBL/GenBank/DDBJ databases">
        <authorList>
            <consortium name="Sanger Xenopus tropicalis EST/cDNA project"/>
        </authorList>
    </citation>
    <scope>NUCLEOTIDE SEQUENCE [LARGE SCALE MRNA]</scope>
    <source>
        <tissue>Egg</tissue>
    </source>
</reference>